<sequence length="400" mass="43656">MGRAKRVVLAYSGGVDTSVCIPYLKQEWGVEEVITLAADLGQGDELGPIRQKALDSGAVESLVIDATAEFVRDYAFPAIQANSLYEGRYPLSTALARPLIAKLLVEAAAKYGADAVAHGCTGKGNDQVRFDVSIAALNPDLKVLAPAREWGMSREETIAYGERFGIPAPVKKSSPYSIDRNLLGRSIEAGPLEDPLHEPLEEVYALTKAIANTPDEPAYIELGFDQGLPVTLNGQALAPVALIQQLNAIAGEHGIGRIDMIENRLVGIKSREIYETPALLVLIQAHQDLESLVLTADVSQYKRGIENSWSNLVYNGLWYSPLKAALDAFIQQTQQRVTGTVRLRLFKGNATVVGRSSEQSLYSPDMATYGAEDRFDHKAAEGFIYVWGMPTRIWSQTHRA</sequence>
<comment type="catalytic activity">
    <reaction evidence="1">
        <text>L-citrulline + L-aspartate + ATP = 2-(N(omega)-L-arginino)succinate + AMP + diphosphate + H(+)</text>
        <dbReference type="Rhea" id="RHEA:10932"/>
        <dbReference type="ChEBI" id="CHEBI:15378"/>
        <dbReference type="ChEBI" id="CHEBI:29991"/>
        <dbReference type="ChEBI" id="CHEBI:30616"/>
        <dbReference type="ChEBI" id="CHEBI:33019"/>
        <dbReference type="ChEBI" id="CHEBI:57472"/>
        <dbReference type="ChEBI" id="CHEBI:57743"/>
        <dbReference type="ChEBI" id="CHEBI:456215"/>
        <dbReference type="EC" id="6.3.4.5"/>
    </reaction>
</comment>
<comment type="pathway">
    <text evidence="1">Amino-acid biosynthesis; L-arginine biosynthesis; L-arginine from L-ornithine and carbamoyl phosphate: step 2/3.</text>
</comment>
<comment type="subunit">
    <text evidence="1">Homotetramer.</text>
</comment>
<comment type="subcellular location">
    <subcellularLocation>
        <location evidence="1">Cytoplasm</location>
    </subcellularLocation>
</comment>
<comment type="similarity">
    <text evidence="1">Belongs to the argininosuccinate synthase family. Type 1 subfamily.</text>
</comment>
<organism>
    <name type="scientific">Synechococcus elongatus (strain ATCC 33912 / PCC 7942 / FACHB-805)</name>
    <name type="common">Anacystis nidulans R2</name>
    <dbReference type="NCBI Taxonomy" id="1140"/>
    <lineage>
        <taxon>Bacteria</taxon>
        <taxon>Bacillati</taxon>
        <taxon>Cyanobacteriota</taxon>
        <taxon>Cyanophyceae</taxon>
        <taxon>Synechococcales</taxon>
        <taxon>Synechococcaceae</taxon>
        <taxon>Synechococcus</taxon>
    </lineage>
</organism>
<name>ASSY_SYNE7</name>
<feature type="chain" id="PRO_0000263986" description="Argininosuccinate synthase">
    <location>
        <begin position="1"/>
        <end position="400"/>
    </location>
</feature>
<feature type="binding site" evidence="1">
    <location>
        <begin position="10"/>
        <end position="18"/>
    </location>
    <ligand>
        <name>ATP</name>
        <dbReference type="ChEBI" id="CHEBI:30616"/>
    </ligand>
</feature>
<feature type="binding site" evidence="1">
    <location>
        <position position="38"/>
    </location>
    <ligand>
        <name>ATP</name>
        <dbReference type="ChEBI" id="CHEBI:30616"/>
    </ligand>
</feature>
<feature type="binding site" evidence="1">
    <location>
        <position position="89"/>
    </location>
    <ligand>
        <name>L-citrulline</name>
        <dbReference type="ChEBI" id="CHEBI:57743"/>
    </ligand>
</feature>
<feature type="binding site" evidence="1">
    <location>
        <position position="119"/>
    </location>
    <ligand>
        <name>ATP</name>
        <dbReference type="ChEBI" id="CHEBI:30616"/>
    </ligand>
</feature>
<feature type="binding site" evidence="1">
    <location>
        <position position="121"/>
    </location>
    <ligand>
        <name>L-aspartate</name>
        <dbReference type="ChEBI" id="CHEBI:29991"/>
    </ligand>
</feature>
<feature type="binding site" evidence="1">
    <location>
        <position position="125"/>
    </location>
    <ligand>
        <name>L-aspartate</name>
        <dbReference type="ChEBI" id="CHEBI:29991"/>
    </ligand>
</feature>
<feature type="binding site" evidence="1">
    <location>
        <position position="125"/>
    </location>
    <ligand>
        <name>L-citrulline</name>
        <dbReference type="ChEBI" id="CHEBI:57743"/>
    </ligand>
</feature>
<feature type="binding site" evidence="1">
    <location>
        <position position="126"/>
    </location>
    <ligand>
        <name>L-aspartate</name>
        <dbReference type="ChEBI" id="CHEBI:29991"/>
    </ligand>
</feature>
<feature type="binding site" evidence="1">
    <location>
        <position position="129"/>
    </location>
    <ligand>
        <name>L-citrulline</name>
        <dbReference type="ChEBI" id="CHEBI:57743"/>
    </ligand>
</feature>
<feature type="binding site" evidence="1">
    <location>
        <position position="177"/>
    </location>
    <ligand>
        <name>L-citrulline</name>
        <dbReference type="ChEBI" id="CHEBI:57743"/>
    </ligand>
</feature>
<feature type="binding site" evidence="1">
    <location>
        <position position="186"/>
    </location>
    <ligand>
        <name>L-citrulline</name>
        <dbReference type="ChEBI" id="CHEBI:57743"/>
    </ligand>
</feature>
<feature type="binding site" evidence="1">
    <location>
        <position position="262"/>
    </location>
    <ligand>
        <name>L-citrulline</name>
        <dbReference type="ChEBI" id="CHEBI:57743"/>
    </ligand>
</feature>
<feature type="binding site" evidence="1">
    <location>
        <position position="274"/>
    </location>
    <ligand>
        <name>L-citrulline</name>
        <dbReference type="ChEBI" id="CHEBI:57743"/>
    </ligand>
</feature>
<gene>
    <name evidence="1" type="primary">argG</name>
    <name type="ordered locus">Synpcc7942_0009</name>
</gene>
<accession>Q31SC8</accession>
<evidence type="ECO:0000255" key="1">
    <source>
        <dbReference type="HAMAP-Rule" id="MF_00005"/>
    </source>
</evidence>
<proteinExistence type="inferred from homology"/>
<dbReference type="EC" id="6.3.4.5" evidence="1"/>
<dbReference type="EMBL" id="CP000100">
    <property type="protein sequence ID" value="ABB56041.1"/>
    <property type="molecule type" value="Genomic_DNA"/>
</dbReference>
<dbReference type="RefSeq" id="WP_011243798.1">
    <property type="nucleotide sequence ID" value="NZ_JACJTX010000002.1"/>
</dbReference>
<dbReference type="SMR" id="Q31SC8"/>
<dbReference type="STRING" id="1140.Synpcc7942_0009"/>
<dbReference type="PaxDb" id="1140-Synpcc7942_0009"/>
<dbReference type="KEGG" id="syf:Synpcc7942_0009"/>
<dbReference type="eggNOG" id="COG0137">
    <property type="taxonomic scope" value="Bacteria"/>
</dbReference>
<dbReference type="HOGENOM" id="CLU_032784_4_2_3"/>
<dbReference type="OrthoDB" id="9801641at2"/>
<dbReference type="BioCyc" id="SYNEL:SYNPCC7942_0009-MONOMER"/>
<dbReference type="UniPathway" id="UPA00068">
    <property type="reaction ID" value="UER00113"/>
</dbReference>
<dbReference type="Proteomes" id="UP000889800">
    <property type="component" value="Chromosome"/>
</dbReference>
<dbReference type="GO" id="GO:0005737">
    <property type="term" value="C:cytoplasm"/>
    <property type="evidence" value="ECO:0007669"/>
    <property type="project" value="UniProtKB-SubCell"/>
</dbReference>
<dbReference type="GO" id="GO:0004055">
    <property type="term" value="F:argininosuccinate synthase activity"/>
    <property type="evidence" value="ECO:0007669"/>
    <property type="project" value="UniProtKB-UniRule"/>
</dbReference>
<dbReference type="GO" id="GO:0005524">
    <property type="term" value="F:ATP binding"/>
    <property type="evidence" value="ECO:0007669"/>
    <property type="project" value="UniProtKB-UniRule"/>
</dbReference>
<dbReference type="GO" id="GO:0000053">
    <property type="term" value="P:argininosuccinate metabolic process"/>
    <property type="evidence" value="ECO:0007669"/>
    <property type="project" value="TreeGrafter"/>
</dbReference>
<dbReference type="GO" id="GO:0006526">
    <property type="term" value="P:L-arginine biosynthetic process"/>
    <property type="evidence" value="ECO:0007669"/>
    <property type="project" value="UniProtKB-UniRule"/>
</dbReference>
<dbReference type="GO" id="GO:0000050">
    <property type="term" value="P:urea cycle"/>
    <property type="evidence" value="ECO:0007669"/>
    <property type="project" value="TreeGrafter"/>
</dbReference>
<dbReference type="CDD" id="cd01999">
    <property type="entry name" value="ASS"/>
    <property type="match status" value="1"/>
</dbReference>
<dbReference type="FunFam" id="3.40.50.620:FF:000038">
    <property type="entry name" value="Argininosuccinate synthase"/>
    <property type="match status" value="1"/>
</dbReference>
<dbReference type="FunFam" id="3.90.1260.10:FF:000007">
    <property type="entry name" value="Argininosuccinate synthase"/>
    <property type="match status" value="1"/>
</dbReference>
<dbReference type="Gene3D" id="3.90.1260.10">
    <property type="entry name" value="Argininosuccinate synthetase, chain A, domain 2"/>
    <property type="match status" value="1"/>
</dbReference>
<dbReference type="Gene3D" id="3.40.50.620">
    <property type="entry name" value="HUPs"/>
    <property type="match status" value="1"/>
</dbReference>
<dbReference type="Gene3D" id="1.20.5.470">
    <property type="entry name" value="Single helix bin"/>
    <property type="match status" value="1"/>
</dbReference>
<dbReference type="HAMAP" id="MF_00005">
    <property type="entry name" value="Arg_succ_synth_type1"/>
    <property type="match status" value="1"/>
</dbReference>
<dbReference type="InterPro" id="IPR048268">
    <property type="entry name" value="Arginosuc_syn_C"/>
</dbReference>
<dbReference type="InterPro" id="IPR048267">
    <property type="entry name" value="Arginosuc_syn_N"/>
</dbReference>
<dbReference type="InterPro" id="IPR001518">
    <property type="entry name" value="Arginosuc_synth"/>
</dbReference>
<dbReference type="InterPro" id="IPR018223">
    <property type="entry name" value="Arginosuc_synth_CS"/>
</dbReference>
<dbReference type="InterPro" id="IPR023434">
    <property type="entry name" value="Arginosuc_synth_type_1_subfam"/>
</dbReference>
<dbReference type="InterPro" id="IPR024074">
    <property type="entry name" value="AS_cat/multimer_dom_body"/>
</dbReference>
<dbReference type="InterPro" id="IPR014729">
    <property type="entry name" value="Rossmann-like_a/b/a_fold"/>
</dbReference>
<dbReference type="NCBIfam" id="TIGR00032">
    <property type="entry name" value="argG"/>
    <property type="match status" value="1"/>
</dbReference>
<dbReference type="NCBIfam" id="NF001770">
    <property type="entry name" value="PRK00509.1"/>
    <property type="match status" value="1"/>
</dbReference>
<dbReference type="PANTHER" id="PTHR11587">
    <property type="entry name" value="ARGININOSUCCINATE SYNTHASE"/>
    <property type="match status" value="1"/>
</dbReference>
<dbReference type="PANTHER" id="PTHR11587:SF2">
    <property type="entry name" value="ARGININOSUCCINATE SYNTHASE"/>
    <property type="match status" value="1"/>
</dbReference>
<dbReference type="Pfam" id="PF20979">
    <property type="entry name" value="Arginosuc_syn_C"/>
    <property type="match status" value="1"/>
</dbReference>
<dbReference type="Pfam" id="PF00764">
    <property type="entry name" value="Arginosuc_synth"/>
    <property type="match status" value="1"/>
</dbReference>
<dbReference type="SUPFAM" id="SSF52402">
    <property type="entry name" value="Adenine nucleotide alpha hydrolases-like"/>
    <property type="match status" value="1"/>
</dbReference>
<dbReference type="SUPFAM" id="SSF69864">
    <property type="entry name" value="Argininosuccinate synthetase, C-terminal domain"/>
    <property type="match status" value="1"/>
</dbReference>
<dbReference type="PROSITE" id="PS00564">
    <property type="entry name" value="ARGININOSUCCIN_SYN_1"/>
    <property type="match status" value="1"/>
</dbReference>
<dbReference type="PROSITE" id="PS00565">
    <property type="entry name" value="ARGININOSUCCIN_SYN_2"/>
    <property type="match status" value="1"/>
</dbReference>
<protein>
    <recommendedName>
        <fullName evidence="1">Argininosuccinate synthase</fullName>
        <ecNumber evidence="1">6.3.4.5</ecNumber>
    </recommendedName>
    <alternativeName>
        <fullName evidence="1">Citrulline--aspartate ligase</fullName>
    </alternativeName>
</protein>
<keyword id="KW-0028">Amino-acid biosynthesis</keyword>
<keyword id="KW-0055">Arginine biosynthesis</keyword>
<keyword id="KW-0067">ATP-binding</keyword>
<keyword id="KW-0963">Cytoplasm</keyword>
<keyword id="KW-0436">Ligase</keyword>
<keyword id="KW-0547">Nucleotide-binding</keyword>
<keyword id="KW-1185">Reference proteome</keyword>
<reference key="1">
    <citation type="submission" date="2005-08" db="EMBL/GenBank/DDBJ databases">
        <title>Complete sequence of chromosome 1 of Synechococcus elongatus PCC 7942.</title>
        <authorList>
            <consortium name="US DOE Joint Genome Institute"/>
            <person name="Copeland A."/>
            <person name="Lucas S."/>
            <person name="Lapidus A."/>
            <person name="Barry K."/>
            <person name="Detter J.C."/>
            <person name="Glavina T."/>
            <person name="Hammon N."/>
            <person name="Israni S."/>
            <person name="Pitluck S."/>
            <person name="Schmutz J."/>
            <person name="Larimer F."/>
            <person name="Land M."/>
            <person name="Kyrpides N."/>
            <person name="Lykidis A."/>
            <person name="Golden S."/>
            <person name="Richardson P."/>
        </authorList>
    </citation>
    <scope>NUCLEOTIDE SEQUENCE [LARGE SCALE GENOMIC DNA]</scope>
    <source>
        <strain>ATCC 33912 / PCC 7942 / FACHB-805</strain>
    </source>
</reference>